<evidence type="ECO:0000255" key="1"/>
<evidence type="ECO:0000305" key="2"/>
<sequence>MANLLETSIFFSSADKLLSFPPKNSQTHHLPFSAFINGGRKIRKSSTITFATDTVTYNGTTSAEVKSSVEDPMEVEVAEGYTMAQFCDKIIDLFLNEKPKVKQWKTYLVLRDEWNKYSVNFYKRCRIRADTETDPILKQKLVSLESKVKKIDKEMEKHNDLLKEIQENPTDINAIAAKRRRDFTGEFFRYVTLLSETLDGLEDRDAVARLATRCLSAVSAYDNTLESVETLDTAQAKFEDILNSPSVDSACEKIRSLAKAKELDSSLILLINSAYAAAKESQTVTNEAKDIMYHLYKATKSSLRSITPKEIKLLKYLLNITDPEERFSALATAFSPGDDHEAKDPKALYTTPKELHKWIKIMLDAYHLNKEETDIKEAKQMSQPIVIQRLFILKDTIEDEYLDKKTIVADETPKKEEEDTTIEDFLN</sequence>
<protein>
    <recommendedName>
        <fullName>Uncharacterized protein At4g37920</fullName>
    </recommendedName>
</protein>
<feature type="chain" id="PRO_0000352660" description="Uncharacterized protein At4g37920">
    <location>
        <begin position="1"/>
        <end position="427"/>
    </location>
</feature>
<feature type="coiled-coil region" evidence="1">
    <location>
        <begin position="135"/>
        <end position="168"/>
    </location>
</feature>
<feature type="sequence conflict" description="In Ref. 3; AAO22797." evidence="2" ref="3">
    <original>T</original>
    <variation>A</variation>
    <location>
        <position position="192"/>
    </location>
</feature>
<feature type="sequence conflict" description="In Ref. 3; AAO22797." evidence="2" ref="3">
    <original>V</original>
    <variation>I</variation>
    <location>
        <position position="284"/>
    </location>
</feature>
<feature type="sequence conflict" description="In Ref. 3; AAO22797." evidence="2" ref="3">
    <original>K</original>
    <variation>E</variation>
    <location>
        <position position="353"/>
    </location>
</feature>
<name>Y4920_ARATH</name>
<dbReference type="EMBL" id="AL035538">
    <property type="protein sequence ID" value="CAB37532.1"/>
    <property type="status" value="ALT_SEQ"/>
    <property type="molecule type" value="Genomic_DNA"/>
</dbReference>
<dbReference type="EMBL" id="AL161592">
    <property type="protein sequence ID" value="CAB80457.1"/>
    <property type="status" value="ALT_SEQ"/>
    <property type="molecule type" value="Genomic_DNA"/>
</dbReference>
<dbReference type="EMBL" id="CP002687">
    <property type="protein sequence ID" value="AEE86853.1"/>
    <property type="molecule type" value="Genomic_DNA"/>
</dbReference>
<dbReference type="EMBL" id="BT002988">
    <property type="protein sequence ID" value="AAO22797.1"/>
    <property type="status" value="ALT_INIT"/>
    <property type="molecule type" value="mRNA"/>
</dbReference>
<dbReference type="PIR" id="T05619">
    <property type="entry name" value="T05619"/>
</dbReference>
<dbReference type="RefSeq" id="NP_195505.2">
    <property type="nucleotide sequence ID" value="NM_119953.4"/>
</dbReference>
<dbReference type="FunCoup" id="Q84WN0">
    <property type="interactions" value="1252"/>
</dbReference>
<dbReference type="STRING" id="3702.Q84WN0"/>
<dbReference type="PaxDb" id="3702-AT4G37920.1"/>
<dbReference type="ProteomicsDB" id="242830"/>
<dbReference type="EnsemblPlants" id="AT4G37920.1">
    <property type="protein sequence ID" value="AT4G37920.1"/>
    <property type="gene ID" value="AT4G37920"/>
</dbReference>
<dbReference type="GeneID" id="829948"/>
<dbReference type="Gramene" id="AT4G37920.1">
    <property type="protein sequence ID" value="AT4G37920.1"/>
    <property type="gene ID" value="AT4G37920"/>
</dbReference>
<dbReference type="KEGG" id="ath:AT4G37920"/>
<dbReference type="Araport" id="AT4G37920"/>
<dbReference type="TAIR" id="AT4G37920"/>
<dbReference type="eggNOG" id="ENOG502QV44">
    <property type="taxonomic scope" value="Eukaryota"/>
</dbReference>
<dbReference type="HOGENOM" id="CLU_038023_1_0_1"/>
<dbReference type="InParanoid" id="Q84WN0"/>
<dbReference type="OMA" id="IMYHIYK"/>
<dbReference type="PhylomeDB" id="Q84WN0"/>
<dbReference type="PRO" id="PR:Q84WN0"/>
<dbReference type="Proteomes" id="UP000006548">
    <property type="component" value="Chromosome 4"/>
</dbReference>
<dbReference type="ExpressionAtlas" id="Q84WN0">
    <property type="expression patterns" value="baseline and differential"/>
</dbReference>
<dbReference type="GO" id="GO:0009941">
    <property type="term" value="C:chloroplast envelope"/>
    <property type="evidence" value="ECO:0007005"/>
    <property type="project" value="TAIR"/>
</dbReference>
<dbReference type="GO" id="GO:0009535">
    <property type="term" value="C:chloroplast thylakoid membrane"/>
    <property type="evidence" value="ECO:0007005"/>
    <property type="project" value="TAIR"/>
</dbReference>
<dbReference type="InterPro" id="IPR040320">
    <property type="entry name" value="At4g37920-like"/>
</dbReference>
<dbReference type="PANTHER" id="PTHR31755">
    <property type="entry name" value="FOLATE RECEPTOR-LIKE"/>
    <property type="match status" value="1"/>
</dbReference>
<dbReference type="PANTHER" id="PTHR31755:SF2">
    <property type="entry name" value="OS08G0320800 PROTEIN"/>
    <property type="match status" value="1"/>
</dbReference>
<comment type="sequence caution" evidence="2">
    <conflict type="erroneous initiation">
        <sequence resource="EMBL-CDS" id="AAO22797"/>
    </conflict>
</comment>
<comment type="sequence caution" evidence="2">
    <conflict type="erroneous gene model prediction">
        <sequence resource="EMBL-CDS" id="CAB37532"/>
    </conflict>
    <text>The predicted gene At4g37920 has been split into 2 genes: At4g37920 and At4g37925.</text>
</comment>
<comment type="sequence caution" evidence="2">
    <conflict type="erroneous gene model prediction">
        <sequence resource="EMBL-CDS" id="CAB80457"/>
    </conflict>
    <text>The predicted gene At4g37920 has been split into 2 genes: At4g37920 and At4g37925.</text>
</comment>
<proteinExistence type="evidence at transcript level"/>
<accession>Q84WN0</accession>
<accession>Q9SZJ4</accession>
<reference key="1">
    <citation type="journal article" date="1999" name="Nature">
        <title>Sequence and analysis of chromosome 4 of the plant Arabidopsis thaliana.</title>
        <authorList>
            <person name="Mayer K.F.X."/>
            <person name="Schueller C."/>
            <person name="Wambutt R."/>
            <person name="Murphy G."/>
            <person name="Volckaert G."/>
            <person name="Pohl T."/>
            <person name="Duesterhoeft A."/>
            <person name="Stiekema W."/>
            <person name="Entian K.-D."/>
            <person name="Terryn N."/>
            <person name="Harris B."/>
            <person name="Ansorge W."/>
            <person name="Brandt P."/>
            <person name="Grivell L.A."/>
            <person name="Rieger M."/>
            <person name="Weichselgartner M."/>
            <person name="de Simone V."/>
            <person name="Obermaier B."/>
            <person name="Mache R."/>
            <person name="Mueller M."/>
            <person name="Kreis M."/>
            <person name="Delseny M."/>
            <person name="Puigdomenech P."/>
            <person name="Watson M."/>
            <person name="Schmidtheini T."/>
            <person name="Reichert B."/>
            <person name="Portetelle D."/>
            <person name="Perez-Alonso M."/>
            <person name="Boutry M."/>
            <person name="Bancroft I."/>
            <person name="Vos P."/>
            <person name="Hoheisel J."/>
            <person name="Zimmermann W."/>
            <person name="Wedler H."/>
            <person name="Ridley P."/>
            <person name="Langham S.-A."/>
            <person name="McCullagh B."/>
            <person name="Bilham L."/>
            <person name="Robben J."/>
            <person name="van der Schueren J."/>
            <person name="Grymonprez B."/>
            <person name="Chuang Y.-J."/>
            <person name="Vandenbussche F."/>
            <person name="Braeken M."/>
            <person name="Weltjens I."/>
            <person name="Voet M."/>
            <person name="Bastiaens I."/>
            <person name="Aert R."/>
            <person name="Defoor E."/>
            <person name="Weitzenegger T."/>
            <person name="Bothe G."/>
            <person name="Ramsperger U."/>
            <person name="Hilbert H."/>
            <person name="Braun M."/>
            <person name="Holzer E."/>
            <person name="Brandt A."/>
            <person name="Peters S."/>
            <person name="van Staveren M."/>
            <person name="Dirkse W."/>
            <person name="Mooijman P."/>
            <person name="Klein Lankhorst R."/>
            <person name="Rose M."/>
            <person name="Hauf J."/>
            <person name="Koetter P."/>
            <person name="Berneiser S."/>
            <person name="Hempel S."/>
            <person name="Feldpausch M."/>
            <person name="Lamberth S."/>
            <person name="Van den Daele H."/>
            <person name="De Keyser A."/>
            <person name="Buysshaert C."/>
            <person name="Gielen J."/>
            <person name="Villarroel R."/>
            <person name="De Clercq R."/>
            <person name="van Montagu M."/>
            <person name="Rogers J."/>
            <person name="Cronin A."/>
            <person name="Quail M.A."/>
            <person name="Bray-Allen S."/>
            <person name="Clark L."/>
            <person name="Doggett J."/>
            <person name="Hall S."/>
            <person name="Kay M."/>
            <person name="Lennard N."/>
            <person name="McLay K."/>
            <person name="Mayes R."/>
            <person name="Pettett A."/>
            <person name="Rajandream M.A."/>
            <person name="Lyne M."/>
            <person name="Benes V."/>
            <person name="Rechmann S."/>
            <person name="Borkova D."/>
            <person name="Bloecker H."/>
            <person name="Scharfe M."/>
            <person name="Grimm M."/>
            <person name="Loehnert T.-H."/>
            <person name="Dose S."/>
            <person name="de Haan M."/>
            <person name="Maarse A.C."/>
            <person name="Schaefer M."/>
            <person name="Mueller-Auer S."/>
            <person name="Gabel C."/>
            <person name="Fuchs M."/>
            <person name="Fartmann B."/>
            <person name="Granderath K."/>
            <person name="Dauner D."/>
            <person name="Herzl A."/>
            <person name="Neumann S."/>
            <person name="Argiriou A."/>
            <person name="Vitale D."/>
            <person name="Liguori R."/>
            <person name="Piravandi E."/>
            <person name="Massenet O."/>
            <person name="Quigley F."/>
            <person name="Clabauld G."/>
            <person name="Muendlein A."/>
            <person name="Felber R."/>
            <person name="Schnabl S."/>
            <person name="Hiller R."/>
            <person name="Schmidt W."/>
            <person name="Lecharny A."/>
            <person name="Aubourg S."/>
            <person name="Chefdor F."/>
            <person name="Cooke R."/>
            <person name="Berger C."/>
            <person name="Monfort A."/>
            <person name="Casacuberta E."/>
            <person name="Gibbons T."/>
            <person name="Weber N."/>
            <person name="Vandenbol M."/>
            <person name="Bargues M."/>
            <person name="Terol J."/>
            <person name="Torres A."/>
            <person name="Perez-Perez A."/>
            <person name="Purnelle B."/>
            <person name="Bent E."/>
            <person name="Johnson S."/>
            <person name="Tacon D."/>
            <person name="Jesse T."/>
            <person name="Heijnen L."/>
            <person name="Schwarz S."/>
            <person name="Scholler P."/>
            <person name="Heber S."/>
            <person name="Francs P."/>
            <person name="Bielke C."/>
            <person name="Frishman D."/>
            <person name="Haase D."/>
            <person name="Lemcke K."/>
            <person name="Mewes H.-W."/>
            <person name="Stocker S."/>
            <person name="Zaccaria P."/>
            <person name="Bevan M."/>
            <person name="Wilson R.K."/>
            <person name="de la Bastide M."/>
            <person name="Habermann K."/>
            <person name="Parnell L."/>
            <person name="Dedhia N."/>
            <person name="Gnoj L."/>
            <person name="Schutz K."/>
            <person name="Huang E."/>
            <person name="Spiegel L."/>
            <person name="Sekhon M."/>
            <person name="Murray J."/>
            <person name="Sheet P."/>
            <person name="Cordes M."/>
            <person name="Abu-Threideh J."/>
            <person name="Stoneking T."/>
            <person name="Kalicki J."/>
            <person name="Graves T."/>
            <person name="Harmon G."/>
            <person name="Edwards J."/>
            <person name="Latreille P."/>
            <person name="Courtney L."/>
            <person name="Cloud J."/>
            <person name="Abbott A."/>
            <person name="Scott K."/>
            <person name="Johnson D."/>
            <person name="Minx P."/>
            <person name="Bentley D."/>
            <person name="Fulton B."/>
            <person name="Miller N."/>
            <person name="Greco T."/>
            <person name="Kemp K."/>
            <person name="Kramer J."/>
            <person name="Fulton L."/>
            <person name="Mardis E."/>
            <person name="Dante M."/>
            <person name="Pepin K."/>
            <person name="Hillier L.W."/>
            <person name="Nelson J."/>
            <person name="Spieth J."/>
            <person name="Ryan E."/>
            <person name="Andrews S."/>
            <person name="Geisel C."/>
            <person name="Layman D."/>
            <person name="Du H."/>
            <person name="Ali J."/>
            <person name="Berghoff A."/>
            <person name="Jones K."/>
            <person name="Drone K."/>
            <person name="Cotton M."/>
            <person name="Joshu C."/>
            <person name="Antonoiu B."/>
            <person name="Zidanic M."/>
            <person name="Strong C."/>
            <person name="Sun H."/>
            <person name="Lamar B."/>
            <person name="Yordan C."/>
            <person name="Ma P."/>
            <person name="Zhong J."/>
            <person name="Preston R."/>
            <person name="Vil D."/>
            <person name="Shekher M."/>
            <person name="Matero A."/>
            <person name="Shah R."/>
            <person name="Swaby I.K."/>
            <person name="O'Shaughnessy A."/>
            <person name="Rodriguez M."/>
            <person name="Hoffman J."/>
            <person name="Till S."/>
            <person name="Granat S."/>
            <person name="Shohdy N."/>
            <person name="Hasegawa A."/>
            <person name="Hameed A."/>
            <person name="Lodhi M."/>
            <person name="Johnson A."/>
            <person name="Chen E."/>
            <person name="Marra M.A."/>
            <person name="Martienssen R."/>
            <person name="McCombie W.R."/>
        </authorList>
    </citation>
    <scope>NUCLEOTIDE SEQUENCE [LARGE SCALE GENOMIC DNA]</scope>
    <source>
        <strain>cv. Columbia</strain>
    </source>
</reference>
<reference key="2">
    <citation type="journal article" date="2017" name="Plant J.">
        <title>Araport11: a complete reannotation of the Arabidopsis thaliana reference genome.</title>
        <authorList>
            <person name="Cheng C.Y."/>
            <person name="Krishnakumar V."/>
            <person name="Chan A.P."/>
            <person name="Thibaud-Nissen F."/>
            <person name="Schobel S."/>
            <person name="Town C.D."/>
        </authorList>
    </citation>
    <scope>GENOME REANNOTATION</scope>
    <source>
        <strain>cv. Columbia</strain>
    </source>
</reference>
<reference key="3">
    <citation type="journal article" date="2003" name="Science">
        <title>Empirical analysis of transcriptional activity in the Arabidopsis genome.</title>
        <authorList>
            <person name="Yamada K."/>
            <person name="Lim J."/>
            <person name="Dale J.M."/>
            <person name="Chen H."/>
            <person name="Shinn P."/>
            <person name="Palm C.J."/>
            <person name="Southwick A.M."/>
            <person name="Wu H.C."/>
            <person name="Kim C.J."/>
            <person name="Nguyen M."/>
            <person name="Pham P.K."/>
            <person name="Cheuk R.F."/>
            <person name="Karlin-Newmann G."/>
            <person name="Liu S.X."/>
            <person name="Lam B."/>
            <person name="Sakano H."/>
            <person name="Wu T."/>
            <person name="Yu G."/>
            <person name="Miranda M."/>
            <person name="Quach H.L."/>
            <person name="Tripp M."/>
            <person name="Chang C.H."/>
            <person name="Lee J.M."/>
            <person name="Toriumi M.J."/>
            <person name="Chan M.M."/>
            <person name="Tang C.C."/>
            <person name="Onodera C.S."/>
            <person name="Deng J.M."/>
            <person name="Akiyama K."/>
            <person name="Ansari Y."/>
            <person name="Arakawa T."/>
            <person name="Banh J."/>
            <person name="Banno F."/>
            <person name="Bowser L."/>
            <person name="Brooks S.Y."/>
            <person name="Carninci P."/>
            <person name="Chao Q."/>
            <person name="Choy N."/>
            <person name="Enju A."/>
            <person name="Goldsmith A.D."/>
            <person name="Gurjal M."/>
            <person name="Hansen N.F."/>
            <person name="Hayashizaki Y."/>
            <person name="Johnson-Hopson C."/>
            <person name="Hsuan V.W."/>
            <person name="Iida K."/>
            <person name="Karnes M."/>
            <person name="Khan S."/>
            <person name="Koesema E."/>
            <person name="Ishida J."/>
            <person name="Jiang P.X."/>
            <person name="Jones T."/>
            <person name="Kawai J."/>
            <person name="Kamiya A."/>
            <person name="Meyers C."/>
            <person name="Nakajima M."/>
            <person name="Narusaka M."/>
            <person name="Seki M."/>
            <person name="Sakurai T."/>
            <person name="Satou M."/>
            <person name="Tamse R."/>
            <person name="Vaysberg M."/>
            <person name="Wallender E.K."/>
            <person name="Wong C."/>
            <person name="Yamamura Y."/>
            <person name="Yuan S."/>
            <person name="Shinozaki K."/>
            <person name="Davis R.W."/>
            <person name="Theologis A."/>
            <person name="Ecker J.R."/>
        </authorList>
    </citation>
    <scope>NUCLEOTIDE SEQUENCE [LARGE SCALE MRNA]</scope>
    <source>
        <strain>cv. Columbia</strain>
    </source>
</reference>
<keyword id="KW-0175">Coiled coil</keyword>
<keyword id="KW-1185">Reference proteome</keyword>
<organism>
    <name type="scientific">Arabidopsis thaliana</name>
    <name type="common">Mouse-ear cress</name>
    <dbReference type="NCBI Taxonomy" id="3702"/>
    <lineage>
        <taxon>Eukaryota</taxon>
        <taxon>Viridiplantae</taxon>
        <taxon>Streptophyta</taxon>
        <taxon>Embryophyta</taxon>
        <taxon>Tracheophyta</taxon>
        <taxon>Spermatophyta</taxon>
        <taxon>Magnoliopsida</taxon>
        <taxon>eudicotyledons</taxon>
        <taxon>Gunneridae</taxon>
        <taxon>Pentapetalae</taxon>
        <taxon>rosids</taxon>
        <taxon>malvids</taxon>
        <taxon>Brassicales</taxon>
        <taxon>Brassicaceae</taxon>
        <taxon>Camelineae</taxon>
        <taxon>Arabidopsis</taxon>
    </lineage>
</organism>
<gene>
    <name type="ordered locus">At4g37920</name>
    <name type="ORF">F20D10.40</name>
</gene>